<evidence type="ECO:0000255" key="1">
    <source>
        <dbReference type="HAMAP-Rule" id="MF_00685"/>
    </source>
</evidence>
<proteinExistence type="inferred from homology"/>
<accession>A1VC54</accession>
<name>GLGB_NITV4</name>
<feature type="chain" id="PRO_1000044975" description="1,4-alpha-glucan branching enzyme GlgB">
    <location>
        <begin position="1"/>
        <end position="640"/>
    </location>
</feature>
<feature type="active site" description="Nucleophile" evidence="1">
    <location>
        <position position="317"/>
    </location>
</feature>
<feature type="active site" description="Proton donor" evidence="1">
    <location>
        <position position="370"/>
    </location>
</feature>
<reference key="1">
    <citation type="journal article" date="2009" name="Environ. Microbiol.">
        <title>Contribution of mobile genetic elements to Desulfovibrio vulgaris genome plasticity.</title>
        <authorList>
            <person name="Walker C.B."/>
            <person name="Stolyar S."/>
            <person name="Chivian D."/>
            <person name="Pinel N."/>
            <person name="Gabster J.A."/>
            <person name="Dehal P.S."/>
            <person name="He Z."/>
            <person name="Yang Z.K."/>
            <person name="Yen H.C."/>
            <person name="Zhou J."/>
            <person name="Wall J.D."/>
            <person name="Hazen T.C."/>
            <person name="Arkin A.P."/>
            <person name="Stahl D.A."/>
        </authorList>
    </citation>
    <scope>NUCLEOTIDE SEQUENCE [LARGE SCALE GENOMIC DNA]</scope>
    <source>
        <strain>DP4</strain>
    </source>
</reference>
<dbReference type="EC" id="2.4.1.18" evidence="1"/>
<dbReference type="EMBL" id="CP000527">
    <property type="protein sequence ID" value="ABM28020.1"/>
    <property type="molecule type" value="Genomic_DNA"/>
</dbReference>
<dbReference type="RefSeq" id="WP_011791978.1">
    <property type="nucleotide sequence ID" value="NC_008751.1"/>
</dbReference>
<dbReference type="SMR" id="A1VC54"/>
<dbReference type="CAZy" id="CBM48">
    <property type="family name" value="Carbohydrate-Binding Module Family 48"/>
</dbReference>
<dbReference type="CAZy" id="GH13">
    <property type="family name" value="Glycoside Hydrolase Family 13"/>
</dbReference>
<dbReference type="KEGG" id="dvl:Dvul_0999"/>
<dbReference type="HOGENOM" id="CLU_004245_3_2_7"/>
<dbReference type="UniPathway" id="UPA00164"/>
<dbReference type="Proteomes" id="UP000009173">
    <property type="component" value="Chromosome"/>
</dbReference>
<dbReference type="GO" id="GO:0005829">
    <property type="term" value="C:cytosol"/>
    <property type="evidence" value="ECO:0007669"/>
    <property type="project" value="TreeGrafter"/>
</dbReference>
<dbReference type="GO" id="GO:0003844">
    <property type="term" value="F:1,4-alpha-glucan branching enzyme activity"/>
    <property type="evidence" value="ECO:0007669"/>
    <property type="project" value="UniProtKB-UniRule"/>
</dbReference>
<dbReference type="GO" id="GO:0043169">
    <property type="term" value="F:cation binding"/>
    <property type="evidence" value="ECO:0007669"/>
    <property type="project" value="InterPro"/>
</dbReference>
<dbReference type="GO" id="GO:0004553">
    <property type="term" value="F:hydrolase activity, hydrolyzing O-glycosyl compounds"/>
    <property type="evidence" value="ECO:0007669"/>
    <property type="project" value="InterPro"/>
</dbReference>
<dbReference type="GO" id="GO:0005978">
    <property type="term" value="P:glycogen biosynthetic process"/>
    <property type="evidence" value="ECO:0007669"/>
    <property type="project" value="UniProtKB-UniRule"/>
</dbReference>
<dbReference type="CDD" id="cd11322">
    <property type="entry name" value="AmyAc_Glg_BE"/>
    <property type="match status" value="1"/>
</dbReference>
<dbReference type="CDD" id="cd02855">
    <property type="entry name" value="E_set_GBE_prok_N"/>
    <property type="match status" value="1"/>
</dbReference>
<dbReference type="FunFam" id="2.60.40.1180:FF:000002">
    <property type="entry name" value="1,4-alpha-glucan branching enzyme GlgB"/>
    <property type="match status" value="1"/>
</dbReference>
<dbReference type="FunFam" id="3.20.20.80:FF:000003">
    <property type="entry name" value="1,4-alpha-glucan branching enzyme GlgB"/>
    <property type="match status" value="1"/>
</dbReference>
<dbReference type="Gene3D" id="3.20.20.80">
    <property type="entry name" value="Glycosidases"/>
    <property type="match status" value="1"/>
</dbReference>
<dbReference type="Gene3D" id="2.60.40.1180">
    <property type="entry name" value="Golgi alpha-mannosidase II"/>
    <property type="match status" value="1"/>
</dbReference>
<dbReference type="Gene3D" id="2.60.40.10">
    <property type="entry name" value="Immunoglobulins"/>
    <property type="match status" value="1"/>
</dbReference>
<dbReference type="HAMAP" id="MF_00685">
    <property type="entry name" value="GlgB"/>
    <property type="match status" value="1"/>
</dbReference>
<dbReference type="InterPro" id="IPR006048">
    <property type="entry name" value="A-amylase/branching_C"/>
</dbReference>
<dbReference type="InterPro" id="IPR037439">
    <property type="entry name" value="Branching_enzy"/>
</dbReference>
<dbReference type="InterPro" id="IPR006407">
    <property type="entry name" value="GlgB"/>
</dbReference>
<dbReference type="InterPro" id="IPR044143">
    <property type="entry name" value="GlgB_N_E_set_prok"/>
</dbReference>
<dbReference type="InterPro" id="IPR006047">
    <property type="entry name" value="Glyco_hydro_13_cat_dom"/>
</dbReference>
<dbReference type="InterPro" id="IPR004193">
    <property type="entry name" value="Glyco_hydro_13_N"/>
</dbReference>
<dbReference type="InterPro" id="IPR013780">
    <property type="entry name" value="Glyco_hydro_b"/>
</dbReference>
<dbReference type="InterPro" id="IPR017853">
    <property type="entry name" value="Glycoside_hydrolase_SF"/>
</dbReference>
<dbReference type="InterPro" id="IPR013783">
    <property type="entry name" value="Ig-like_fold"/>
</dbReference>
<dbReference type="InterPro" id="IPR014756">
    <property type="entry name" value="Ig_E-set"/>
</dbReference>
<dbReference type="NCBIfam" id="TIGR01515">
    <property type="entry name" value="branching_enzym"/>
    <property type="match status" value="1"/>
</dbReference>
<dbReference type="NCBIfam" id="NF003811">
    <property type="entry name" value="PRK05402.1"/>
    <property type="match status" value="1"/>
</dbReference>
<dbReference type="NCBIfam" id="NF008967">
    <property type="entry name" value="PRK12313.1"/>
    <property type="match status" value="1"/>
</dbReference>
<dbReference type="PANTHER" id="PTHR43651">
    <property type="entry name" value="1,4-ALPHA-GLUCAN-BRANCHING ENZYME"/>
    <property type="match status" value="1"/>
</dbReference>
<dbReference type="PANTHER" id="PTHR43651:SF3">
    <property type="entry name" value="1,4-ALPHA-GLUCAN-BRANCHING ENZYME"/>
    <property type="match status" value="1"/>
</dbReference>
<dbReference type="Pfam" id="PF00128">
    <property type="entry name" value="Alpha-amylase"/>
    <property type="match status" value="2"/>
</dbReference>
<dbReference type="Pfam" id="PF02806">
    <property type="entry name" value="Alpha-amylase_C"/>
    <property type="match status" value="1"/>
</dbReference>
<dbReference type="Pfam" id="PF02922">
    <property type="entry name" value="CBM_48"/>
    <property type="match status" value="1"/>
</dbReference>
<dbReference type="PIRSF" id="PIRSF000463">
    <property type="entry name" value="GlgB"/>
    <property type="match status" value="1"/>
</dbReference>
<dbReference type="SMART" id="SM00642">
    <property type="entry name" value="Aamy"/>
    <property type="match status" value="1"/>
</dbReference>
<dbReference type="SUPFAM" id="SSF51445">
    <property type="entry name" value="(Trans)glycosidases"/>
    <property type="match status" value="1"/>
</dbReference>
<dbReference type="SUPFAM" id="SSF81296">
    <property type="entry name" value="E set domains"/>
    <property type="match status" value="1"/>
</dbReference>
<dbReference type="SUPFAM" id="SSF51011">
    <property type="entry name" value="Glycosyl hydrolase domain"/>
    <property type="match status" value="1"/>
</dbReference>
<gene>
    <name evidence="1" type="primary">glgB</name>
    <name type="ordered locus">Dvul_0999</name>
</gene>
<comment type="function">
    <text evidence="1">Catalyzes the formation of the alpha-1,6-glucosidic linkages in glycogen by scission of a 1,4-alpha-linked oligosaccharide from growing alpha-1,4-glucan chains and the subsequent attachment of the oligosaccharide to the alpha-1,6 position.</text>
</comment>
<comment type="catalytic activity">
    <reaction evidence="1">
        <text>Transfers a segment of a (1-&gt;4)-alpha-D-glucan chain to a primary hydroxy group in a similar glucan chain.</text>
        <dbReference type="EC" id="2.4.1.18"/>
    </reaction>
</comment>
<comment type="pathway">
    <text evidence="1">Glycan biosynthesis; glycogen biosynthesis.</text>
</comment>
<comment type="subunit">
    <text evidence="1">Monomer.</text>
</comment>
<comment type="similarity">
    <text evidence="1">Belongs to the glycosyl hydrolase 13 family. GlgB subfamily.</text>
</comment>
<protein>
    <recommendedName>
        <fullName evidence="1">1,4-alpha-glucan branching enzyme GlgB</fullName>
        <ecNumber evidence="1">2.4.1.18</ecNumber>
    </recommendedName>
    <alternativeName>
        <fullName evidence="1">1,4-alpha-D-glucan:1,4-alpha-D-glucan 6-glucosyl-transferase</fullName>
    </alternativeName>
    <alternativeName>
        <fullName evidence="1">Alpha-(1-&gt;4)-glucan branching enzyme</fullName>
    </alternativeName>
    <alternativeName>
        <fullName evidence="1">Glycogen branching enzyme</fullName>
        <shortName evidence="1">BE</shortName>
    </alternativeName>
</protein>
<sequence length="640" mass="72779">MTIPCSRPLFIEPFDLYLFGMGRHRHLYRILGAHPAVQDGEAGYRFAVWAPNARSVHLSGDCNGWRHEGCPLFPVGVSGVWAAFVPGVRRGSLYKFVVRGADGRQEQKADPFALWAEMRPGVASVAWDIDNHAWGDGAWMAERARQGLPLERPVSIYEVHLGSWRRRHGDGHPFLTYDELGDQLIPYATGMGFTHLELLPVAEHPLDQSWGYQTGHYYAPTSRFGSPEGFKRFVDRCHQAGLGVILDWVPAHFPRDAWSLGRFDGTALYEHLDPRLGEHPDWGTYIFNYGRNEVRNFLTANALYWLREFHIDGLRMDAVASMLYLDYSREAGQWLPNRHGGRENLDAVDFLREVNTVIHAEFPGAMTLAEESTAWPGVSRPVYTGGLGFSFKWNMGWMHDTLGYLAEDPIHRAYHHGSLTFSMLYAFSENFVLPLSHDEVVHGKGALLSKMPGDMWQQQANLRLLYAYQWAHPGKKLLFMGGEFGQWNEWDESRELDWCLYRFPAHEGIARLVGDLNRLLRSEPAMHRRDHDWSGFRWVDFADYGSSVISFLRLAEGERPLLWIFNFTPVVRRFYRVPCPRGGTWRELCNTDSAYYGGSDVGNAGAVMAREDHWGGGHFIELTLPPLAAMCFAPVTGQGT</sequence>
<organism>
    <name type="scientific">Nitratidesulfovibrio vulgaris (strain DP4)</name>
    <name type="common">Desulfovibrio vulgaris</name>
    <dbReference type="NCBI Taxonomy" id="391774"/>
    <lineage>
        <taxon>Bacteria</taxon>
        <taxon>Pseudomonadati</taxon>
        <taxon>Thermodesulfobacteriota</taxon>
        <taxon>Desulfovibrionia</taxon>
        <taxon>Desulfovibrionales</taxon>
        <taxon>Desulfovibrionaceae</taxon>
        <taxon>Nitratidesulfovibrio</taxon>
    </lineage>
</organism>
<keyword id="KW-0119">Carbohydrate metabolism</keyword>
<keyword id="KW-0320">Glycogen biosynthesis</keyword>
<keyword id="KW-0321">Glycogen metabolism</keyword>
<keyword id="KW-0328">Glycosyltransferase</keyword>
<keyword id="KW-0808">Transferase</keyword>